<evidence type="ECO:0000250" key="1"/>
<evidence type="ECO:0000255" key="2"/>
<evidence type="ECO:0000255" key="3">
    <source>
        <dbReference type="PROSITE-ProRule" id="PRU00040"/>
    </source>
</evidence>
<evidence type="ECO:0000256" key="4">
    <source>
        <dbReference type="SAM" id="MobiDB-lite"/>
    </source>
</evidence>
<evidence type="ECO:0000269" key="5">
    <source>
    </source>
</evidence>
<evidence type="ECO:0000305" key="6"/>
<evidence type="ECO:0007829" key="7">
    <source>
        <dbReference type="PDB" id="1BV4"/>
    </source>
</evidence>
<evidence type="ECO:0007829" key="8">
    <source>
        <dbReference type="PDB" id="1RDL"/>
    </source>
</evidence>
<feature type="signal peptide">
    <location>
        <begin position="1"/>
        <end position="18"/>
    </location>
</feature>
<feature type="chain" id="PRO_0000017411" description="Mannose-binding protein C" evidence="5">
    <location>
        <begin position="19"/>
        <end position="244"/>
    </location>
</feature>
<feature type="domain" description="Collagen-like">
    <location>
        <begin position="38"/>
        <end position="96"/>
    </location>
</feature>
<feature type="domain" description="C-type lectin" evidence="3">
    <location>
        <begin position="129"/>
        <end position="241"/>
    </location>
</feature>
<feature type="region of interest" description="Disordered" evidence="4">
    <location>
        <begin position="43"/>
        <end position="99"/>
    </location>
</feature>
<feature type="coiled-coil region" evidence="1">
    <location>
        <begin position="108"/>
        <end position="126"/>
    </location>
</feature>
<feature type="compositionally biased region" description="Basic and acidic residues" evidence="4">
    <location>
        <begin position="45"/>
        <end position="57"/>
    </location>
</feature>
<feature type="compositionally biased region" description="Low complexity" evidence="4">
    <location>
        <begin position="65"/>
        <end position="74"/>
    </location>
</feature>
<feature type="modified residue" description="4-hydroxyproline" evidence="2">
    <location>
        <position position="43"/>
    </location>
</feature>
<feature type="modified residue" description="4-hydroxyproline" evidence="2">
    <location>
        <position position="58"/>
    </location>
</feature>
<feature type="modified residue" description="4-hydroxyproline" evidence="2">
    <location>
        <position position="69"/>
    </location>
</feature>
<feature type="modified residue" description="4-hydroxyproline" evidence="2">
    <location>
        <position position="78"/>
    </location>
</feature>
<feature type="modified residue" description="4-hydroxyproline" evidence="2">
    <location>
        <position position="81"/>
    </location>
</feature>
<feature type="disulfide bond" description="Interchain">
    <location>
        <position position="29"/>
    </location>
</feature>
<feature type="disulfide bond" description="Interchain">
    <location>
        <position position="34"/>
    </location>
</feature>
<feature type="disulfide bond">
    <location>
        <begin position="151"/>
        <end position="240"/>
    </location>
</feature>
<feature type="disulfide bond">
    <location>
        <begin position="218"/>
        <end position="232"/>
    </location>
</feature>
<feature type="sequence conflict" description="In Ref. 2; AAA41554." evidence="6" ref="2">
    <original>GL</original>
    <variation>AW</variation>
    <location>
        <begin position="38"/>
        <end position="39"/>
    </location>
</feature>
<feature type="strand" evidence="8">
    <location>
        <begin position="134"/>
        <end position="137"/>
    </location>
</feature>
<feature type="helix" evidence="8">
    <location>
        <begin position="144"/>
        <end position="153"/>
    </location>
</feature>
<feature type="helix" evidence="8">
    <location>
        <begin position="164"/>
        <end position="173"/>
    </location>
</feature>
<feature type="strand" evidence="8">
    <location>
        <begin position="178"/>
        <end position="183"/>
    </location>
</feature>
<feature type="strand" evidence="8">
    <location>
        <begin position="185"/>
        <end position="187"/>
    </location>
</feature>
<feature type="strand" evidence="7">
    <location>
        <begin position="190"/>
        <end position="193"/>
    </location>
</feature>
<feature type="strand" evidence="8">
    <location>
        <begin position="218"/>
        <end position="221"/>
    </location>
</feature>
<feature type="strand" evidence="8">
    <location>
        <begin position="227"/>
        <end position="230"/>
    </location>
</feature>
<feature type="strand" evidence="8">
    <location>
        <begin position="236"/>
        <end position="242"/>
    </location>
</feature>
<proteinExistence type="evidence at protein level"/>
<comment type="function">
    <text evidence="1">Calcium-dependent lectin involved in innate immune defense. Binds mannose, fucose and N-acetylglucosamine on different microorganisms and activates the lectin complement pathway. Binds to late apoptotic cells, as well as to apoptotic blebs and to necrotic cells, but not to early apoptotic cells, facilitating their uptake by macrophages (By similarity).</text>
</comment>
<comment type="subunit">
    <text evidence="1">Oligomeric complex of 3 or more homotrimers. Interacts with MASP1 and MASP2 (By similarity). Interacts with MEP1A and MEP1B and may inhibit their catalytic activity (By similarity).</text>
</comment>
<comment type="subcellular location">
    <subcellularLocation>
        <location evidence="1">Secreted</location>
    </subcellularLocation>
</comment>
<comment type="domain">
    <text evidence="1">The coiled-coil domain mediates trimerization.</text>
</comment>
<dbReference type="EMBL" id="M14103">
    <property type="protein sequence ID" value="AAA41554.1"/>
    <property type="molecule type" value="mRNA"/>
</dbReference>
<dbReference type="EMBL" id="X05023">
    <property type="protein sequence ID" value="CAA28687.1"/>
    <property type="molecule type" value="mRNA"/>
</dbReference>
<dbReference type="PIR" id="A24791">
    <property type="entry name" value="LNRTMC"/>
</dbReference>
<dbReference type="RefSeq" id="NP_073195.2">
    <property type="nucleotide sequence ID" value="NM_022704.2"/>
</dbReference>
<dbReference type="RefSeq" id="XP_003749135.1">
    <property type="nucleotide sequence ID" value="XM_003749087.3"/>
</dbReference>
<dbReference type="RefSeq" id="XP_003749136.1">
    <property type="nucleotide sequence ID" value="XM_003749088.3"/>
</dbReference>
<dbReference type="RefSeq" id="XP_006231311.1">
    <property type="nucleotide sequence ID" value="XM_006231249.4"/>
</dbReference>
<dbReference type="RefSeq" id="XP_006231312.1">
    <property type="nucleotide sequence ID" value="XM_006231250.4"/>
</dbReference>
<dbReference type="PDB" id="1BV4">
    <property type="method" value="X-ray"/>
    <property type="resolution" value="1.85 A"/>
    <property type="chains" value="A/B/C/D=127-244"/>
</dbReference>
<dbReference type="PDB" id="1KZA">
    <property type="method" value="X-ray"/>
    <property type="resolution" value="1.74 A"/>
    <property type="chains" value="1/2=129-243"/>
</dbReference>
<dbReference type="PDB" id="1KZB">
    <property type="method" value="X-ray"/>
    <property type="resolution" value="1.80 A"/>
    <property type="chains" value="1/2=129-243"/>
</dbReference>
<dbReference type="PDB" id="1KZC">
    <property type="method" value="X-ray"/>
    <property type="resolution" value="1.85 A"/>
    <property type="chains" value="1/2=129-243"/>
</dbReference>
<dbReference type="PDB" id="1KZD">
    <property type="method" value="X-ray"/>
    <property type="resolution" value="1.90 A"/>
    <property type="chains" value="1/2=129-243"/>
</dbReference>
<dbReference type="PDB" id="1KZE">
    <property type="method" value="X-ray"/>
    <property type="resolution" value="1.80 A"/>
    <property type="chains" value="1/2=129-243"/>
</dbReference>
<dbReference type="PDB" id="1RDI">
    <property type="method" value="X-ray"/>
    <property type="resolution" value="1.80 A"/>
    <property type="chains" value="1/2=132-244"/>
</dbReference>
<dbReference type="PDB" id="1RDJ">
    <property type="method" value="X-ray"/>
    <property type="resolution" value="1.80 A"/>
    <property type="chains" value="1/2=132-244"/>
</dbReference>
<dbReference type="PDB" id="1RDK">
    <property type="method" value="X-ray"/>
    <property type="resolution" value="1.80 A"/>
    <property type="chains" value="1/2=132-244"/>
</dbReference>
<dbReference type="PDB" id="1RDL">
    <property type="method" value="X-ray"/>
    <property type="resolution" value="1.70 A"/>
    <property type="chains" value="1/2=132-244"/>
</dbReference>
<dbReference type="PDB" id="1RDM">
    <property type="method" value="X-ray"/>
    <property type="resolution" value="1.90 A"/>
    <property type="chains" value="1/2=132-244"/>
</dbReference>
<dbReference type="PDB" id="1RDN">
    <property type="method" value="X-ray"/>
    <property type="resolution" value="1.80 A"/>
    <property type="chains" value="1/2=132-244"/>
</dbReference>
<dbReference type="PDB" id="1RDO">
    <property type="method" value="X-ray"/>
    <property type="resolution" value="1.70 A"/>
    <property type="chains" value="1/2=132-244"/>
</dbReference>
<dbReference type="PDBsum" id="1BV4"/>
<dbReference type="PDBsum" id="1KZA"/>
<dbReference type="PDBsum" id="1KZB"/>
<dbReference type="PDBsum" id="1KZC"/>
<dbReference type="PDBsum" id="1KZD"/>
<dbReference type="PDBsum" id="1KZE"/>
<dbReference type="PDBsum" id="1RDI"/>
<dbReference type="PDBsum" id="1RDJ"/>
<dbReference type="PDBsum" id="1RDK"/>
<dbReference type="PDBsum" id="1RDL"/>
<dbReference type="PDBsum" id="1RDM"/>
<dbReference type="PDBsum" id="1RDN"/>
<dbReference type="PDBsum" id="1RDO"/>
<dbReference type="SMR" id="P08661"/>
<dbReference type="CORUM" id="P08661"/>
<dbReference type="FunCoup" id="P08661">
    <property type="interactions" value="189"/>
</dbReference>
<dbReference type="STRING" id="10116.ENSRNOP00000064876"/>
<dbReference type="UniLectin" id="P08661"/>
<dbReference type="PhosphoSitePlus" id="P08661"/>
<dbReference type="PaxDb" id="10116-ENSRNOP00000064876"/>
<dbReference type="PeptideAtlas" id="P08661"/>
<dbReference type="GeneID" id="64668"/>
<dbReference type="KEGG" id="rno:64668"/>
<dbReference type="UCSC" id="RGD:67380">
    <property type="organism name" value="rat"/>
</dbReference>
<dbReference type="AGR" id="RGD:67380"/>
<dbReference type="CTD" id="4153"/>
<dbReference type="RGD" id="67380">
    <property type="gene designation" value="Mbl2"/>
</dbReference>
<dbReference type="eggNOG" id="KOG4297">
    <property type="taxonomic scope" value="Eukaryota"/>
</dbReference>
<dbReference type="HOGENOM" id="CLU_049894_3_0_1"/>
<dbReference type="InParanoid" id="P08661"/>
<dbReference type="OrthoDB" id="87282at9989"/>
<dbReference type="Reactome" id="R-RNO-166662">
    <property type="pathway name" value="Lectin pathway of complement activation"/>
</dbReference>
<dbReference type="Reactome" id="R-RNO-166663">
    <property type="pathway name" value="Initial triggering of complement"/>
</dbReference>
<dbReference type="EvolutionaryTrace" id="P08661"/>
<dbReference type="PRO" id="PR:P08661"/>
<dbReference type="Proteomes" id="UP000002494">
    <property type="component" value="Chromosome 1"/>
</dbReference>
<dbReference type="Bgee" id="ENSRNOG00000050305">
    <property type="expression patterns" value="Expressed in liver and 2 other cell types or tissues"/>
</dbReference>
<dbReference type="GO" id="GO:0005581">
    <property type="term" value="C:collagen trimer"/>
    <property type="evidence" value="ECO:0007669"/>
    <property type="project" value="UniProtKB-KW"/>
</dbReference>
<dbReference type="GO" id="GO:0005615">
    <property type="term" value="C:extracellular space"/>
    <property type="evidence" value="ECO:0000314"/>
    <property type="project" value="RGD"/>
</dbReference>
<dbReference type="GO" id="GO:0005771">
    <property type="term" value="C:multivesicular body"/>
    <property type="evidence" value="ECO:0000318"/>
    <property type="project" value="GO_Central"/>
</dbReference>
<dbReference type="GO" id="GO:0032991">
    <property type="term" value="C:protein-containing complex"/>
    <property type="evidence" value="ECO:0000315"/>
    <property type="project" value="RGD"/>
</dbReference>
<dbReference type="GO" id="GO:1905370">
    <property type="term" value="C:serine-type endopeptidase complex"/>
    <property type="evidence" value="ECO:0000266"/>
    <property type="project" value="RGD"/>
</dbReference>
<dbReference type="GO" id="GO:0005509">
    <property type="term" value="F:calcium ion binding"/>
    <property type="evidence" value="ECO:0000314"/>
    <property type="project" value="RGD"/>
</dbReference>
<dbReference type="GO" id="GO:0048306">
    <property type="term" value="F:calcium-dependent protein binding"/>
    <property type="evidence" value="ECO:0000266"/>
    <property type="project" value="RGD"/>
</dbReference>
<dbReference type="GO" id="GO:0005537">
    <property type="term" value="F:D-mannose binding"/>
    <property type="evidence" value="ECO:0000314"/>
    <property type="project" value="RGD"/>
</dbReference>
<dbReference type="GO" id="GO:0005534">
    <property type="term" value="F:galactose binding"/>
    <property type="evidence" value="ECO:0000314"/>
    <property type="project" value="RGD"/>
</dbReference>
<dbReference type="GO" id="GO:0042802">
    <property type="term" value="F:identical protein binding"/>
    <property type="evidence" value="ECO:0000314"/>
    <property type="project" value="RGD"/>
</dbReference>
<dbReference type="GO" id="GO:0070273">
    <property type="term" value="F:phosphatidylinositol-4-phosphate binding"/>
    <property type="evidence" value="ECO:0000314"/>
    <property type="project" value="RGD"/>
</dbReference>
<dbReference type="GO" id="GO:0002020">
    <property type="term" value="F:protease binding"/>
    <property type="evidence" value="ECO:0000353"/>
    <property type="project" value="RGD"/>
</dbReference>
<dbReference type="GO" id="GO:0005102">
    <property type="term" value="F:signaling receptor binding"/>
    <property type="evidence" value="ECO:0000266"/>
    <property type="project" value="RGD"/>
</dbReference>
<dbReference type="GO" id="GO:0140374">
    <property type="term" value="P:antiviral innate immune response"/>
    <property type="evidence" value="ECO:0000266"/>
    <property type="project" value="RGD"/>
</dbReference>
<dbReference type="GO" id="GO:0002752">
    <property type="term" value="P:cell surface pattern recognition receptor signaling pathway"/>
    <property type="evidence" value="ECO:0000266"/>
    <property type="project" value="RGD"/>
</dbReference>
<dbReference type="GO" id="GO:0006958">
    <property type="term" value="P:complement activation, classical pathway"/>
    <property type="evidence" value="ECO:0007669"/>
    <property type="project" value="UniProtKB-KW"/>
</dbReference>
<dbReference type="GO" id="GO:0001867">
    <property type="term" value="P:complement activation, lectin pathway"/>
    <property type="evidence" value="ECO:0000266"/>
    <property type="project" value="RGD"/>
</dbReference>
<dbReference type="GO" id="GO:0050830">
    <property type="term" value="P:defense response to Gram-positive bacterium"/>
    <property type="evidence" value="ECO:0000266"/>
    <property type="project" value="RGD"/>
</dbReference>
<dbReference type="GO" id="GO:0045087">
    <property type="term" value="P:innate immune response"/>
    <property type="evidence" value="ECO:0000266"/>
    <property type="project" value="RGD"/>
</dbReference>
<dbReference type="GO" id="GO:0051873">
    <property type="term" value="P:killing by host of symbiont cells"/>
    <property type="evidence" value="ECO:0000266"/>
    <property type="project" value="RGD"/>
</dbReference>
<dbReference type="GO" id="GO:0048525">
    <property type="term" value="P:negative regulation of viral process"/>
    <property type="evidence" value="ECO:0000266"/>
    <property type="project" value="RGD"/>
</dbReference>
<dbReference type="GO" id="GO:0045917">
    <property type="term" value="P:positive regulation of complement activation"/>
    <property type="evidence" value="ECO:0000314"/>
    <property type="project" value="RGD"/>
</dbReference>
<dbReference type="GO" id="GO:1903028">
    <property type="term" value="P:positive regulation of opsonization"/>
    <property type="evidence" value="ECO:0000266"/>
    <property type="project" value="RGD"/>
</dbReference>
<dbReference type="GO" id="GO:0050766">
    <property type="term" value="P:positive regulation of phagocytosis"/>
    <property type="evidence" value="ECO:0000266"/>
    <property type="project" value="RGD"/>
</dbReference>
<dbReference type="GO" id="GO:0010954">
    <property type="term" value="P:positive regulation of protein processing"/>
    <property type="evidence" value="ECO:0000314"/>
    <property type="project" value="RGD"/>
</dbReference>
<dbReference type="GO" id="GO:0006508">
    <property type="term" value="P:proteolysis"/>
    <property type="evidence" value="ECO:0000266"/>
    <property type="project" value="RGD"/>
</dbReference>
<dbReference type="GO" id="GO:0043129">
    <property type="term" value="P:surfactant homeostasis"/>
    <property type="evidence" value="ECO:0000318"/>
    <property type="project" value="GO_Central"/>
</dbReference>
<dbReference type="CDD" id="cd03591">
    <property type="entry name" value="CLECT_collectin_like"/>
    <property type="match status" value="1"/>
</dbReference>
<dbReference type="FunFam" id="3.10.100.10:FF:000208">
    <property type="entry name" value="Mannose-binding protein C"/>
    <property type="match status" value="1"/>
</dbReference>
<dbReference type="Gene3D" id="3.10.100.10">
    <property type="entry name" value="Mannose-Binding Protein A, subunit A"/>
    <property type="match status" value="1"/>
</dbReference>
<dbReference type="InterPro" id="IPR001304">
    <property type="entry name" value="C-type_lectin-like"/>
</dbReference>
<dbReference type="InterPro" id="IPR016186">
    <property type="entry name" value="C-type_lectin-like/link_sf"/>
</dbReference>
<dbReference type="InterPro" id="IPR018378">
    <property type="entry name" value="C-type_lectin_CS"/>
</dbReference>
<dbReference type="InterPro" id="IPR051077">
    <property type="entry name" value="Ca-dependent_lectin"/>
</dbReference>
<dbReference type="InterPro" id="IPR008160">
    <property type="entry name" value="Collagen"/>
</dbReference>
<dbReference type="InterPro" id="IPR033990">
    <property type="entry name" value="Collectin_CTLD"/>
</dbReference>
<dbReference type="InterPro" id="IPR016187">
    <property type="entry name" value="CTDL_fold"/>
</dbReference>
<dbReference type="PANTHER" id="PTHR24024:SF34">
    <property type="entry name" value="MANNOSE-BINDING PROTEIN C"/>
    <property type="match status" value="1"/>
</dbReference>
<dbReference type="PANTHER" id="PTHR24024">
    <property type="entry name" value="PULMONARY SURFACTANT-ASSOCIATED PROTEIN A"/>
    <property type="match status" value="1"/>
</dbReference>
<dbReference type="Pfam" id="PF01391">
    <property type="entry name" value="Collagen"/>
    <property type="match status" value="1"/>
</dbReference>
<dbReference type="Pfam" id="PF00059">
    <property type="entry name" value="Lectin_C"/>
    <property type="match status" value="1"/>
</dbReference>
<dbReference type="SMART" id="SM00034">
    <property type="entry name" value="CLECT"/>
    <property type="match status" value="1"/>
</dbReference>
<dbReference type="SUPFAM" id="SSF56436">
    <property type="entry name" value="C-type lectin-like"/>
    <property type="match status" value="1"/>
</dbReference>
<dbReference type="PROSITE" id="PS00615">
    <property type="entry name" value="C_TYPE_LECTIN_1"/>
    <property type="match status" value="1"/>
</dbReference>
<dbReference type="PROSITE" id="PS50041">
    <property type="entry name" value="C_TYPE_LECTIN_2"/>
    <property type="match status" value="1"/>
</dbReference>
<keyword id="KW-0002">3D-structure</keyword>
<keyword id="KW-0106">Calcium</keyword>
<keyword id="KW-0175">Coiled coil</keyword>
<keyword id="KW-0176">Collagen</keyword>
<keyword id="KW-1018">Complement activation lectin pathway</keyword>
<keyword id="KW-0180">Complement pathway</keyword>
<keyword id="KW-0903">Direct protein sequencing</keyword>
<keyword id="KW-1015">Disulfide bond</keyword>
<keyword id="KW-0379">Hydroxylation</keyword>
<keyword id="KW-0391">Immunity</keyword>
<keyword id="KW-0399">Innate immunity</keyword>
<keyword id="KW-0430">Lectin</keyword>
<keyword id="KW-0465">Mannose-binding</keyword>
<keyword id="KW-1185">Reference proteome</keyword>
<keyword id="KW-0677">Repeat</keyword>
<keyword id="KW-0964">Secreted</keyword>
<keyword id="KW-0732">Signal</keyword>
<organism>
    <name type="scientific">Rattus norvegicus</name>
    <name type="common">Rat</name>
    <dbReference type="NCBI Taxonomy" id="10116"/>
    <lineage>
        <taxon>Eukaryota</taxon>
        <taxon>Metazoa</taxon>
        <taxon>Chordata</taxon>
        <taxon>Craniata</taxon>
        <taxon>Vertebrata</taxon>
        <taxon>Euteleostomi</taxon>
        <taxon>Mammalia</taxon>
        <taxon>Eutheria</taxon>
        <taxon>Euarchontoglires</taxon>
        <taxon>Glires</taxon>
        <taxon>Rodentia</taxon>
        <taxon>Myomorpha</taxon>
        <taxon>Muroidea</taxon>
        <taxon>Muridae</taxon>
        <taxon>Murinae</taxon>
        <taxon>Rattus</taxon>
    </lineage>
</organism>
<accession>P08661</accession>
<reference key="1">
    <citation type="journal article" date="1992" name="J. Biochem.">
        <title>Characterization of rat liver mannan-binding protein gene.</title>
        <authorList>
            <person name="Wada M."/>
            <person name="Itoh N."/>
            <person name="Ohta M."/>
            <person name="Kawasaki T."/>
        </authorList>
    </citation>
    <scope>NUCLEOTIDE SEQUENCE [MRNA]</scope>
    <source>
        <tissue>Liver</tissue>
    </source>
</reference>
<reference key="2">
    <citation type="journal article" date="1986" name="J. Biol. Chem.">
        <title>Mannose-binding proteins isolated from rat liver contain carbohydrate-recognition domains linked to collagenous tails. Complete primary structures and homology with pulmonary surfactant apoprotein.</title>
        <authorList>
            <person name="Drickamer K."/>
            <person name="Dordal M.S."/>
            <person name="Reynolds L."/>
        </authorList>
    </citation>
    <scope>NUCLEOTIDE SEQUENCE [MRNA]</scope>
    <scope>PARTIAL PROTEIN SEQUENCE</scope>
    <source>
        <tissue>Liver</tissue>
    </source>
</reference>
<reference key="3">
    <citation type="journal article" date="1987" name="J. Biochem.">
        <title>Primary structure of rat liver mannan-binding protein deduced from its cDNA sequence.</title>
        <authorList>
            <person name="Oka S."/>
            <person name="Itoh N."/>
            <person name="Kawasaki T."/>
            <person name="Yamashina I."/>
        </authorList>
    </citation>
    <scope>NUCLEOTIDE SEQUENCE [MRNA]</scope>
    <source>
        <strain>Wistar</strain>
        <tissue>Liver</tissue>
    </source>
</reference>
<reference key="4">
    <citation type="journal article" date="2000" name="J. Immunol.">
        <title>Impaired secretion of rat mannose-binding protein resulting from mutations in the collagen-like domain.</title>
        <authorList>
            <person name="Heise C.T."/>
            <person name="Nicholls J.R."/>
            <person name="Leamy C.E."/>
            <person name="Wallis R."/>
        </authorList>
    </citation>
    <scope>SUBCELLULAR LOCATION</scope>
</reference>
<reference key="5">
    <citation type="journal article" date="1996" name="J. Biol. Chem.">
        <title>Structural analysis of monosaccharide recognition by rat liver mannose-binding protein.</title>
        <authorList>
            <person name="Ng K.K.-S."/>
            <person name="Drickamer K."/>
            <person name="Weis W.I."/>
        </authorList>
    </citation>
    <scope>X-RAY CRYSTALLOGRAPHY (1.8 ANGSTROMS) OF 133-244</scope>
</reference>
<name>MBL2_RAT</name>
<sequence length="244" mass="26014">MSLFTSFLLLCVLTAVYAETLTEGAQSSCPVIACSSPGLNGFPGKDGHDGAKGEKGEPGQGLRGLQGPPGKVGPAGPPGNPGSKGATGPKGDRGESVEFDTTNIDLEIAALRSELRAMRKWVLLSMSENVGKKYFMSSVRRMPLNRAKALCSELQGTVATPRNAEENRAIQNVAKDVAFLGITDQRTENVFEDLTGNRVRYTNWNEGEPNNVGSGENCVVLLTNGKWNDVPCSDSFLVVCEFSD</sequence>
<gene>
    <name type="primary">Mbl2</name>
</gene>
<protein>
    <recommendedName>
        <fullName>Mannose-binding protein C</fullName>
        <shortName>MBP-C</shortName>
    </recommendedName>
    <alternativeName>
        <fullName>Mannan-binding protein</fullName>
    </alternativeName>
    <alternativeName>
        <fullName>Ra-reactive factor polysaccharide-binding component p28A</fullName>
        <shortName>RaRF p28A</shortName>
    </alternativeName>
</protein>